<organism>
    <name type="scientific">Staphylococcus haemolyticus (strain JCSC1435)</name>
    <dbReference type="NCBI Taxonomy" id="279808"/>
    <lineage>
        <taxon>Bacteria</taxon>
        <taxon>Bacillati</taxon>
        <taxon>Bacillota</taxon>
        <taxon>Bacilli</taxon>
        <taxon>Bacillales</taxon>
        <taxon>Staphylococcaceae</taxon>
        <taxon>Staphylococcus</taxon>
    </lineage>
</organism>
<proteinExistence type="inferred from homology"/>
<name>MNHC2_STAHJ</name>
<reference key="1">
    <citation type="journal article" date="2005" name="J. Bacteriol.">
        <title>Whole-genome sequencing of Staphylococcus haemolyticus uncovers the extreme plasticity of its genome and the evolution of human-colonizing staphylococcal species.</title>
        <authorList>
            <person name="Takeuchi F."/>
            <person name="Watanabe S."/>
            <person name="Baba T."/>
            <person name="Yuzawa H."/>
            <person name="Ito T."/>
            <person name="Morimoto Y."/>
            <person name="Kuroda M."/>
            <person name="Cui L."/>
            <person name="Takahashi M."/>
            <person name="Ankai A."/>
            <person name="Baba S."/>
            <person name="Fukui S."/>
            <person name="Lee J.C."/>
            <person name="Hiramatsu K."/>
        </authorList>
    </citation>
    <scope>NUCLEOTIDE SEQUENCE [LARGE SCALE GENOMIC DNA]</scope>
    <source>
        <strain>JCSC1435</strain>
    </source>
</reference>
<sequence>MNLILLLVIGFLVFIGTYMILSLNLIRIVIGISIYTHAGNLIIMSMGHYSNKMTEPLIHGSNTNYVDPLLQAIVLTAIVIGFAMTAFLLVLVYRTYRVTKEANIDVLRGEEDENEQ</sequence>
<accession>Q4L445</accession>
<keyword id="KW-0050">Antiport</keyword>
<keyword id="KW-1003">Cell membrane</keyword>
<keyword id="KW-0406">Ion transport</keyword>
<keyword id="KW-0472">Membrane</keyword>
<keyword id="KW-0812">Transmembrane</keyword>
<keyword id="KW-1133">Transmembrane helix</keyword>
<keyword id="KW-0813">Transport</keyword>
<feature type="chain" id="PRO_0000372264" description="Putative antiporter subunit mnhC2">
    <location>
        <begin position="1"/>
        <end position="116"/>
    </location>
</feature>
<feature type="transmembrane region" description="Helical" evidence="2">
    <location>
        <begin position="3"/>
        <end position="23"/>
    </location>
</feature>
<feature type="transmembrane region" description="Helical" evidence="2">
    <location>
        <begin position="28"/>
        <end position="48"/>
    </location>
</feature>
<feature type="transmembrane region" description="Helical" evidence="2">
    <location>
        <begin position="72"/>
        <end position="92"/>
    </location>
</feature>
<protein>
    <recommendedName>
        <fullName>Putative antiporter subunit mnhC2</fullName>
    </recommendedName>
    <alternativeName>
        <fullName>Mrp complex subunit C2</fullName>
    </alternativeName>
    <alternativeName>
        <fullName>Putative NADH-ubiquinone oxidoreductase subunit mnhC2</fullName>
    </alternativeName>
</protein>
<comment type="subunit">
    <text evidence="1">May form a heterooligomeric complex that consists of seven subunits: mnhA2, mnhB2, mnhC2, mnhD2, mnhE2, mnhF2 and mnhG2.</text>
</comment>
<comment type="subcellular location">
    <subcellularLocation>
        <location evidence="3">Cell membrane</location>
        <topology evidence="3">Multi-pass membrane protein</topology>
    </subcellularLocation>
</comment>
<comment type="similarity">
    <text evidence="3">Belongs to the CPA3 antiporters (TC 2.A.63) subunit C family.</text>
</comment>
<evidence type="ECO:0000250" key="1"/>
<evidence type="ECO:0000255" key="2"/>
<evidence type="ECO:0000305" key="3"/>
<dbReference type="EMBL" id="AP006716">
    <property type="protein sequence ID" value="BAE05582.1"/>
    <property type="molecule type" value="Genomic_DNA"/>
</dbReference>
<dbReference type="RefSeq" id="WP_011276532.1">
    <property type="nucleotide sequence ID" value="NC_007168.1"/>
</dbReference>
<dbReference type="SMR" id="Q4L445"/>
<dbReference type="GeneID" id="93781587"/>
<dbReference type="KEGG" id="sha:SH2273"/>
<dbReference type="eggNOG" id="COG1006">
    <property type="taxonomic scope" value="Bacteria"/>
</dbReference>
<dbReference type="HOGENOM" id="CLU_082058_3_1_9"/>
<dbReference type="OrthoDB" id="9799219at2"/>
<dbReference type="Proteomes" id="UP000000543">
    <property type="component" value="Chromosome"/>
</dbReference>
<dbReference type="GO" id="GO:0005886">
    <property type="term" value="C:plasma membrane"/>
    <property type="evidence" value="ECO:0007669"/>
    <property type="project" value="UniProtKB-SubCell"/>
</dbReference>
<dbReference type="GO" id="GO:0015297">
    <property type="term" value="F:antiporter activity"/>
    <property type="evidence" value="ECO:0007669"/>
    <property type="project" value="UniProtKB-KW"/>
</dbReference>
<dbReference type="GO" id="GO:0006811">
    <property type="term" value="P:monoatomic ion transport"/>
    <property type="evidence" value="ECO:0007669"/>
    <property type="project" value="UniProtKB-KW"/>
</dbReference>
<dbReference type="Gene3D" id="1.10.287.3510">
    <property type="match status" value="1"/>
</dbReference>
<dbReference type="InterPro" id="IPR050601">
    <property type="entry name" value="CPA3_antiporter_subunitC"/>
</dbReference>
<dbReference type="InterPro" id="IPR039428">
    <property type="entry name" value="NUOK/Mnh_C1-like"/>
</dbReference>
<dbReference type="NCBIfam" id="NF009303">
    <property type="entry name" value="PRK12660.1"/>
    <property type="match status" value="1"/>
</dbReference>
<dbReference type="PANTHER" id="PTHR34583">
    <property type="entry name" value="ANTIPORTER SUBUNIT MNHC2-RELATED"/>
    <property type="match status" value="1"/>
</dbReference>
<dbReference type="PANTHER" id="PTHR34583:SF2">
    <property type="entry name" value="ANTIPORTER SUBUNIT MNHC2-RELATED"/>
    <property type="match status" value="1"/>
</dbReference>
<dbReference type="Pfam" id="PF00420">
    <property type="entry name" value="Oxidored_q2"/>
    <property type="match status" value="1"/>
</dbReference>
<gene>
    <name type="primary">mnhC2</name>
    <name type="synonym">mrpC2</name>
    <name type="ordered locus">SH2273</name>
</gene>